<evidence type="ECO:0000255" key="1">
    <source>
        <dbReference type="HAMAP-Rule" id="MF_01540"/>
    </source>
</evidence>
<keyword id="KW-0004">4Fe-4S</keyword>
<keyword id="KW-0028">Amino-acid biosynthesis</keyword>
<keyword id="KW-0198">Cysteine biosynthesis</keyword>
<keyword id="KW-0349">Heme</keyword>
<keyword id="KW-0408">Iron</keyword>
<keyword id="KW-0411">Iron-sulfur</keyword>
<keyword id="KW-0479">Metal-binding</keyword>
<keyword id="KW-0521">NADP</keyword>
<keyword id="KW-0560">Oxidoreductase</keyword>
<keyword id="KW-1185">Reference proteome</keyword>
<name>CYSI_PHOLL</name>
<proteinExistence type="inferred from homology"/>
<comment type="function">
    <text evidence="1">Component of the sulfite reductase complex that catalyzes the 6-electron reduction of sulfite to sulfide. This is one of several activities required for the biosynthesis of L-cysteine from sulfate.</text>
</comment>
<comment type="catalytic activity">
    <reaction evidence="1">
        <text>hydrogen sulfide + 3 NADP(+) + 3 H2O = sulfite + 3 NADPH + 4 H(+)</text>
        <dbReference type="Rhea" id="RHEA:13801"/>
        <dbReference type="ChEBI" id="CHEBI:15377"/>
        <dbReference type="ChEBI" id="CHEBI:15378"/>
        <dbReference type="ChEBI" id="CHEBI:17359"/>
        <dbReference type="ChEBI" id="CHEBI:29919"/>
        <dbReference type="ChEBI" id="CHEBI:57783"/>
        <dbReference type="ChEBI" id="CHEBI:58349"/>
        <dbReference type="EC" id="1.8.1.2"/>
    </reaction>
</comment>
<comment type="cofactor">
    <cofactor evidence="1">
        <name>siroheme</name>
        <dbReference type="ChEBI" id="CHEBI:60052"/>
    </cofactor>
    <text evidence="1">Binds 1 siroheme per subunit.</text>
</comment>
<comment type="cofactor">
    <cofactor evidence="1">
        <name>[4Fe-4S] cluster</name>
        <dbReference type="ChEBI" id="CHEBI:49883"/>
    </cofactor>
    <text evidence="1">Binds 1 [4Fe-4S] cluster per subunit.</text>
</comment>
<comment type="pathway">
    <text evidence="1">Sulfur metabolism; hydrogen sulfide biosynthesis; hydrogen sulfide from sulfite (NADPH route): step 1/1.</text>
</comment>
<comment type="subunit">
    <text evidence="1">Alpha(8)-beta(8). The alpha component is a flavoprotein, the beta component is a hemoprotein.</text>
</comment>
<comment type="similarity">
    <text evidence="1">Belongs to the nitrite and sulfite reductase 4Fe-4S domain family.</text>
</comment>
<accession>Q7N8L5</accession>
<sequence>MNDKQHGPFIVEGKLADSERMKQESNFLRGTISEDLTNGLTGGFEGDNFLLIRFHGMYQQDDRDIRAERAEQKLEPRHAIMLRCRLPGGVITPQQWLGIDKFAEENTLYGSIRLTNRQTFQFHGILKGKVKLAHQLLNQVGLDSLATANDVNRNVLCTSNPIQSELHQQAYEWAKKISEHLLPRTRAYAELWLDKEKVATTDEEPILGSTYLPRKFKTTVVIPPQNDVDLHANDLNFIAIAEGSKLVGFNVLVGGGLAMTHGDKNTYPSMASEFGYIPLEHTLAIAEAVVTTQRDWGNRTERKNAKTKYTLERVGVETFKAEVERRAGVKFEAIRPYEFTGRGDQIGWLKGIDDKWHLTLFIENGRLLDYPGKPLKSGVAEIAKIHKGDFRLTANQNLIIAGIPESEKQRIETIACRHGLIDDKTTVQRKNSMACVSFPTCPLAMAEAERFLPEFVTHVEQLMNKHGIGDEHIVLRVTGCPNGCARAMLAEVGLVGKALDRYNLHLGGNRIGTRIPRMYKENISSQAILSIMDELIGRWATGRQPNEGFGDFLIRTDIIKPVLDSARDFYDWQEAV</sequence>
<organism>
    <name type="scientific">Photorhabdus laumondii subsp. laumondii (strain DSM 15139 / CIP 105565 / TT01)</name>
    <name type="common">Photorhabdus luminescens subsp. laumondii</name>
    <dbReference type="NCBI Taxonomy" id="243265"/>
    <lineage>
        <taxon>Bacteria</taxon>
        <taxon>Pseudomonadati</taxon>
        <taxon>Pseudomonadota</taxon>
        <taxon>Gammaproteobacteria</taxon>
        <taxon>Enterobacterales</taxon>
        <taxon>Morganellaceae</taxon>
        <taxon>Photorhabdus</taxon>
    </lineage>
</organism>
<feature type="chain" id="PRO_0000199903" description="Sulfite reductase [NADPH] hemoprotein beta-component">
    <location>
        <begin position="1"/>
        <end position="576"/>
    </location>
</feature>
<feature type="binding site" evidence="1">
    <location>
        <position position="435"/>
    </location>
    <ligand>
        <name>[4Fe-4S] cluster</name>
        <dbReference type="ChEBI" id="CHEBI:49883"/>
    </ligand>
</feature>
<feature type="binding site" evidence="1">
    <location>
        <position position="441"/>
    </location>
    <ligand>
        <name>[4Fe-4S] cluster</name>
        <dbReference type="ChEBI" id="CHEBI:49883"/>
    </ligand>
</feature>
<feature type="binding site" evidence="1">
    <location>
        <position position="480"/>
    </location>
    <ligand>
        <name>[4Fe-4S] cluster</name>
        <dbReference type="ChEBI" id="CHEBI:49883"/>
    </ligand>
</feature>
<feature type="binding site" evidence="1">
    <location>
        <position position="484"/>
    </location>
    <ligand>
        <name>[4Fe-4S] cluster</name>
        <dbReference type="ChEBI" id="CHEBI:49883"/>
    </ligand>
</feature>
<feature type="binding site" description="axial binding residue" evidence="1">
    <location>
        <position position="484"/>
    </location>
    <ligand>
        <name>siroheme</name>
        <dbReference type="ChEBI" id="CHEBI:60052"/>
    </ligand>
    <ligandPart>
        <name>Fe</name>
        <dbReference type="ChEBI" id="CHEBI:18248"/>
    </ligandPart>
</feature>
<protein>
    <recommendedName>
        <fullName evidence="1">Sulfite reductase [NADPH] hemoprotein beta-component</fullName>
        <shortName evidence="1">SiR-HP</shortName>
        <shortName evidence="1">SiRHP</shortName>
        <ecNumber evidence="1">1.8.1.2</ecNumber>
    </recommendedName>
</protein>
<reference key="1">
    <citation type="journal article" date="2003" name="Nat. Biotechnol.">
        <title>The genome sequence of the entomopathogenic bacterium Photorhabdus luminescens.</title>
        <authorList>
            <person name="Duchaud E."/>
            <person name="Rusniok C."/>
            <person name="Frangeul L."/>
            <person name="Buchrieser C."/>
            <person name="Givaudan A."/>
            <person name="Taourit S."/>
            <person name="Bocs S."/>
            <person name="Boursaux-Eude C."/>
            <person name="Chandler M."/>
            <person name="Charles J.-F."/>
            <person name="Dassa E."/>
            <person name="Derose R."/>
            <person name="Derzelle S."/>
            <person name="Freyssinet G."/>
            <person name="Gaudriault S."/>
            <person name="Medigue C."/>
            <person name="Lanois A."/>
            <person name="Powell K."/>
            <person name="Siguier P."/>
            <person name="Vincent R."/>
            <person name="Wingate V."/>
            <person name="Zouine M."/>
            <person name="Glaser P."/>
            <person name="Boemare N."/>
            <person name="Danchin A."/>
            <person name="Kunst F."/>
        </authorList>
    </citation>
    <scope>NUCLEOTIDE SEQUENCE [LARGE SCALE GENOMIC DNA]</scope>
    <source>
        <strain>DSM 15139 / CIP 105565 / TT01</strain>
    </source>
</reference>
<dbReference type="EC" id="1.8.1.2" evidence="1"/>
<dbReference type="EMBL" id="BX571861">
    <property type="protein sequence ID" value="CAE12999.1"/>
    <property type="molecule type" value="Genomic_DNA"/>
</dbReference>
<dbReference type="RefSeq" id="WP_011145080.1">
    <property type="nucleotide sequence ID" value="NC_005126.1"/>
</dbReference>
<dbReference type="SMR" id="Q7N8L5"/>
<dbReference type="STRING" id="243265.plu0704"/>
<dbReference type="GeneID" id="48846999"/>
<dbReference type="KEGG" id="plu:plu0704"/>
<dbReference type="eggNOG" id="COG0155">
    <property type="taxonomic scope" value="Bacteria"/>
</dbReference>
<dbReference type="HOGENOM" id="CLU_001975_3_2_6"/>
<dbReference type="OrthoDB" id="3189055at2"/>
<dbReference type="UniPathway" id="UPA00140">
    <property type="reaction ID" value="UER00207"/>
</dbReference>
<dbReference type="Proteomes" id="UP000002514">
    <property type="component" value="Chromosome"/>
</dbReference>
<dbReference type="GO" id="GO:0009337">
    <property type="term" value="C:sulfite reductase complex (NADPH)"/>
    <property type="evidence" value="ECO:0007669"/>
    <property type="project" value="InterPro"/>
</dbReference>
<dbReference type="GO" id="GO:0051539">
    <property type="term" value="F:4 iron, 4 sulfur cluster binding"/>
    <property type="evidence" value="ECO:0007669"/>
    <property type="project" value="UniProtKB-KW"/>
</dbReference>
<dbReference type="GO" id="GO:0020037">
    <property type="term" value="F:heme binding"/>
    <property type="evidence" value="ECO:0007669"/>
    <property type="project" value="InterPro"/>
</dbReference>
<dbReference type="GO" id="GO:0046872">
    <property type="term" value="F:metal ion binding"/>
    <property type="evidence" value="ECO:0007669"/>
    <property type="project" value="UniProtKB-KW"/>
</dbReference>
<dbReference type="GO" id="GO:0050661">
    <property type="term" value="F:NADP binding"/>
    <property type="evidence" value="ECO:0007669"/>
    <property type="project" value="InterPro"/>
</dbReference>
<dbReference type="GO" id="GO:0050311">
    <property type="term" value="F:sulfite reductase (ferredoxin) activity"/>
    <property type="evidence" value="ECO:0007669"/>
    <property type="project" value="TreeGrafter"/>
</dbReference>
<dbReference type="GO" id="GO:0004783">
    <property type="term" value="F:sulfite reductase (NADPH) activity"/>
    <property type="evidence" value="ECO:0007669"/>
    <property type="project" value="UniProtKB-UniRule"/>
</dbReference>
<dbReference type="GO" id="GO:0019344">
    <property type="term" value="P:cysteine biosynthetic process"/>
    <property type="evidence" value="ECO:0007669"/>
    <property type="project" value="UniProtKB-KW"/>
</dbReference>
<dbReference type="GO" id="GO:0070814">
    <property type="term" value="P:hydrogen sulfide biosynthetic process"/>
    <property type="evidence" value="ECO:0007669"/>
    <property type="project" value="UniProtKB-UniRule"/>
</dbReference>
<dbReference type="GO" id="GO:0000103">
    <property type="term" value="P:sulfate assimilation"/>
    <property type="evidence" value="ECO:0007669"/>
    <property type="project" value="UniProtKB-UniRule"/>
</dbReference>
<dbReference type="FunFam" id="3.30.413.10:FF:000003">
    <property type="entry name" value="Sulfite reductase [NADPH] hemoprotein beta-component"/>
    <property type="match status" value="1"/>
</dbReference>
<dbReference type="FunFam" id="3.30.413.10:FF:000004">
    <property type="entry name" value="Sulfite reductase [NADPH] hemoprotein beta-component"/>
    <property type="match status" value="1"/>
</dbReference>
<dbReference type="Gene3D" id="3.30.413.10">
    <property type="entry name" value="Sulfite Reductase Hemoprotein, domain 1"/>
    <property type="match status" value="2"/>
</dbReference>
<dbReference type="HAMAP" id="MF_01540">
    <property type="entry name" value="CysI"/>
    <property type="match status" value="1"/>
</dbReference>
<dbReference type="InterPro" id="IPR011786">
    <property type="entry name" value="CysI"/>
</dbReference>
<dbReference type="InterPro" id="IPR005117">
    <property type="entry name" value="NiRdtase/SiRdtase_haem-b_fer"/>
</dbReference>
<dbReference type="InterPro" id="IPR036136">
    <property type="entry name" value="Nit/Sulf_reduc_fer-like_dom_sf"/>
</dbReference>
<dbReference type="InterPro" id="IPR006067">
    <property type="entry name" value="NO2/SO3_Rdtase_4Fe4S_dom"/>
</dbReference>
<dbReference type="InterPro" id="IPR045169">
    <property type="entry name" value="NO2/SO3_Rdtase_4Fe4S_prot"/>
</dbReference>
<dbReference type="InterPro" id="IPR045854">
    <property type="entry name" value="NO2/SO3_Rdtase_4Fe4S_sf"/>
</dbReference>
<dbReference type="InterPro" id="IPR006066">
    <property type="entry name" value="NO2/SO3_Rdtase_FeS/sirohaem_BS"/>
</dbReference>
<dbReference type="NCBIfam" id="TIGR02041">
    <property type="entry name" value="CysI"/>
    <property type="match status" value="1"/>
</dbReference>
<dbReference type="NCBIfam" id="NF010029">
    <property type="entry name" value="PRK13504.1"/>
    <property type="match status" value="1"/>
</dbReference>
<dbReference type="PANTHER" id="PTHR11493:SF47">
    <property type="entry name" value="SULFITE REDUCTASE [NADPH] SUBUNIT BETA"/>
    <property type="match status" value="1"/>
</dbReference>
<dbReference type="PANTHER" id="PTHR11493">
    <property type="entry name" value="SULFITE REDUCTASE [NADPH] SUBUNIT BETA-RELATED"/>
    <property type="match status" value="1"/>
</dbReference>
<dbReference type="Pfam" id="PF01077">
    <property type="entry name" value="NIR_SIR"/>
    <property type="match status" value="1"/>
</dbReference>
<dbReference type="Pfam" id="PF03460">
    <property type="entry name" value="NIR_SIR_ferr"/>
    <property type="match status" value="2"/>
</dbReference>
<dbReference type="PRINTS" id="PR00397">
    <property type="entry name" value="SIROHAEM"/>
</dbReference>
<dbReference type="SUPFAM" id="SSF56014">
    <property type="entry name" value="Nitrite and sulphite reductase 4Fe-4S domain-like"/>
    <property type="match status" value="2"/>
</dbReference>
<dbReference type="SUPFAM" id="SSF55124">
    <property type="entry name" value="Nitrite/Sulfite reductase N-terminal domain-like"/>
    <property type="match status" value="2"/>
</dbReference>
<dbReference type="PROSITE" id="PS00365">
    <property type="entry name" value="NIR_SIR"/>
    <property type="match status" value="1"/>
</dbReference>
<gene>
    <name evidence="1" type="primary">cysI</name>
    <name type="ordered locus">plu0704</name>
</gene>